<sequence length="346" mass="38435">MEKLARKQVQALTPYLSARRIGGSGDVWLNANESPFDNEYQFNFARLNRYSECQPPELINAYAAYAKVKPEQVLTSRGADEGIELLVRAFCEPNQDAILYCPPTYGMYSISAETIGVETKTVPLTSNWQLDLPAIEASLENVKVVFVCSPNNPTGNIVDRKDILSLLEMTKDRAIVVMDEAYIDFCMEKSTVDLLVDYPHLAILRTLSKAFALAGLRCGFTLANEELINVLLKVIAPYPVPVPVAEIATQALSEAGLARMKYQMLDLSANRAYLQAGLMVLPGVTVFEGWGNYLLVKFPDGDSVFKAAWDHGIILRNSPIENCVRISVGNREECEKTLGFIRNQLI</sequence>
<feature type="chain" id="PRO_0000153475" description="Histidinol-phosphate aminotransferase">
    <location>
        <begin position="1"/>
        <end position="346"/>
    </location>
</feature>
<feature type="modified residue" description="N6-(pyridoxal phosphate)lysine" evidence="1">
    <location>
        <position position="209"/>
    </location>
</feature>
<protein>
    <recommendedName>
        <fullName evidence="1">Histidinol-phosphate aminotransferase</fullName>
        <ecNumber evidence="1">2.6.1.9</ecNumber>
    </recommendedName>
    <alternativeName>
        <fullName evidence="1">Imidazole acetol-phosphate transaminase</fullName>
    </alternativeName>
</protein>
<name>HIS8_ALIF1</name>
<evidence type="ECO:0000255" key="1">
    <source>
        <dbReference type="HAMAP-Rule" id="MF_01023"/>
    </source>
</evidence>
<proteinExistence type="inferred from homology"/>
<accession>Q5E637</accession>
<comment type="catalytic activity">
    <reaction evidence="1">
        <text>L-histidinol phosphate + 2-oxoglutarate = 3-(imidazol-4-yl)-2-oxopropyl phosphate + L-glutamate</text>
        <dbReference type="Rhea" id="RHEA:23744"/>
        <dbReference type="ChEBI" id="CHEBI:16810"/>
        <dbReference type="ChEBI" id="CHEBI:29985"/>
        <dbReference type="ChEBI" id="CHEBI:57766"/>
        <dbReference type="ChEBI" id="CHEBI:57980"/>
        <dbReference type="EC" id="2.6.1.9"/>
    </reaction>
</comment>
<comment type="cofactor">
    <cofactor evidence="1">
        <name>pyridoxal 5'-phosphate</name>
        <dbReference type="ChEBI" id="CHEBI:597326"/>
    </cofactor>
</comment>
<comment type="pathway">
    <text evidence="1">Amino-acid biosynthesis; L-histidine biosynthesis; L-histidine from 5-phospho-alpha-D-ribose 1-diphosphate: step 7/9.</text>
</comment>
<comment type="subunit">
    <text evidence="1">Homodimer.</text>
</comment>
<comment type="similarity">
    <text evidence="1">Belongs to the class-II pyridoxal-phosphate-dependent aminotransferase family. Histidinol-phosphate aminotransferase subfamily.</text>
</comment>
<gene>
    <name evidence="1" type="primary">hisC</name>
    <name type="ordered locus">VF_1014</name>
</gene>
<dbReference type="EC" id="2.6.1.9" evidence="1"/>
<dbReference type="EMBL" id="CP000020">
    <property type="protein sequence ID" value="AAW85509.1"/>
    <property type="molecule type" value="Genomic_DNA"/>
</dbReference>
<dbReference type="RefSeq" id="WP_011261647.1">
    <property type="nucleotide sequence ID" value="NC_006840.2"/>
</dbReference>
<dbReference type="RefSeq" id="YP_204397.1">
    <property type="nucleotide sequence ID" value="NC_006840.2"/>
</dbReference>
<dbReference type="SMR" id="Q5E637"/>
<dbReference type="STRING" id="312309.VF_1014"/>
<dbReference type="EnsemblBacteria" id="AAW85509">
    <property type="protein sequence ID" value="AAW85509"/>
    <property type="gene ID" value="VF_1014"/>
</dbReference>
<dbReference type="GeneID" id="54163686"/>
<dbReference type="KEGG" id="vfi:VF_1014"/>
<dbReference type="PATRIC" id="fig|312309.11.peg.1014"/>
<dbReference type="eggNOG" id="COG0079">
    <property type="taxonomic scope" value="Bacteria"/>
</dbReference>
<dbReference type="HOGENOM" id="CLU_017584_3_1_6"/>
<dbReference type="OrthoDB" id="9813612at2"/>
<dbReference type="UniPathway" id="UPA00031">
    <property type="reaction ID" value="UER00012"/>
</dbReference>
<dbReference type="Proteomes" id="UP000000537">
    <property type="component" value="Chromosome I"/>
</dbReference>
<dbReference type="GO" id="GO:0004400">
    <property type="term" value="F:histidinol-phosphate transaminase activity"/>
    <property type="evidence" value="ECO:0007669"/>
    <property type="project" value="UniProtKB-UniRule"/>
</dbReference>
<dbReference type="GO" id="GO:0030170">
    <property type="term" value="F:pyridoxal phosphate binding"/>
    <property type="evidence" value="ECO:0007669"/>
    <property type="project" value="InterPro"/>
</dbReference>
<dbReference type="GO" id="GO:0000105">
    <property type="term" value="P:L-histidine biosynthetic process"/>
    <property type="evidence" value="ECO:0007669"/>
    <property type="project" value="UniProtKB-UniRule"/>
</dbReference>
<dbReference type="CDD" id="cd00609">
    <property type="entry name" value="AAT_like"/>
    <property type="match status" value="1"/>
</dbReference>
<dbReference type="Gene3D" id="3.90.1150.10">
    <property type="entry name" value="Aspartate Aminotransferase, domain 1"/>
    <property type="match status" value="1"/>
</dbReference>
<dbReference type="Gene3D" id="3.40.640.10">
    <property type="entry name" value="Type I PLP-dependent aspartate aminotransferase-like (Major domain)"/>
    <property type="match status" value="1"/>
</dbReference>
<dbReference type="HAMAP" id="MF_01023">
    <property type="entry name" value="HisC_aminotrans_2"/>
    <property type="match status" value="1"/>
</dbReference>
<dbReference type="InterPro" id="IPR001917">
    <property type="entry name" value="Aminotrans_II_pyridoxalP_BS"/>
</dbReference>
<dbReference type="InterPro" id="IPR004839">
    <property type="entry name" value="Aminotransferase_I/II_large"/>
</dbReference>
<dbReference type="InterPro" id="IPR005861">
    <property type="entry name" value="HisP_aminotrans"/>
</dbReference>
<dbReference type="InterPro" id="IPR015424">
    <property type="entry name" value="PyrdxlP-dep_Trfase"/>
</dbReference>
<dbReference type="InterPro" id="IPR015421">
    <property type="entry name" value="PyrdxlP-dep_Trfase_major"/>
</dbReference>
<dbReference type="InterPro" id="IPR015422">
    <property type="entry name" value="PyrdxlP-dep_Trfase_small"/>
</dbReference>
<dbReference type="NCBIfam" id="TIGR01141">
    <property type="entry name" value="hisC"/>
    <property type="match status" value="1"/>
</dbReference>
<dbReference type="PANTHER" id="PTHR42885:SF2">
    <property type="entry name" value="HISTIDINOL-PHOSPHATE AMINOTRANSFERASE"/>
    <property type="match status" value="1"/>
</dbReference>
<dbReference type="PANTHER" id="PTHR42885">
    <property type="entry name" value="HISTIDINOL-PHOSPHATE AMINOTRANSFERASE-RELATED"/>
    <property type="match status" value="1"/>
</dbReference>
<dbReference type="Pfam" id="PF00155">
    <property type="entry name" value="Aminotran_1_2"/>
    <property type="match status" value="1"/>
</dbReference>
<dbReference type="SUPFAM" id="SSF53383">
    <property type="entry name" value="PLP-dependent transferases"/>
    <property type="match status" value="1"/>
</dbReference>
<dbReference type="PROSITE" id="PS00599">
    <property type="entry name" value="AA_TRANSFER_CLASS_2"/>
    <property type="match status" value="1"/>
</dbReference>
<organism>
    <name type="scientific">Aliivibrio fischeri (strain ATCC 700601 / ES114)</name>
    <name type="common">Vibrio fischeri</name>
    <dbReference type="NCBI Taxonomy" id="312309"/>
    <lineage>
        <taxon>Bacteria</taxon>
        <taxon>Pseudomonadati</taxon>
        <taxon>Pseudomonadota</taxon>
        <taxon>Gammaproteobacteria</taxon>
        <taxon>Vibrionales</taxon>
        <taxon>Vibrionaceae</taxon>
        <taxon>Aliivibrio</taxon>
    </lineage>
</organism>
<reference key="1">
    <citation type="journal article" date="2005" name="Proc. Natl. Acad. Sci. U.S.A.">
        <title>Complete genome sequence of Vibrio fischeri: a symbiotic bacterium with pathogenic congeners.</title>
        <authorList>
            <person name="Ruby E.G."/>
            <person name="Urbanowski M."/>
            <person name="Campbell J."/>
            <person name="Dunn A."/>
            <person name="Faini M."/>
            <person name="Gunsalus R."/>
            <person name="Lostroh P."/>
            <person name="Lupp C."/>
            <person name="McCann J."/>
            <person name="Millikan D."/>
            <person name="Schaefer A."/>
            <person name="Stabb E."/>
            <person name="Stevens A."/>
            <person name="Visick K."/>
            <person name="Whistler C."/>
            <person name="Greenberg E.P."/>
        </authorList>
    </citation>
    <scope>NUCLEOTIDE SEQUENCE [LARGE SCALE GENOMIC DNA]</scope>
    <source>
        <strain>ATCC 700601 / ES114</strain>
    </source>
</reference>
<keyword id="KW-0028">Amino-acid biosynthesis</keyword>
<keyword id="KW-0032">Aminotransferase</keyword>
<keyword id="KW-0368">Histidine biosynthesis</keyword>
<keyword id="KW-0663">Pyridoxal phosphate</keyword>
<keyword id="KW-1185">Reference proteome</keyword>
<keyword id="KW-0808">Transferase</keyword>